<evidence type="ECO:0000255" key="1">
    <source>
        <dbReference type="HAMAP-Rule" id="MF_04001"/>
    </source>
</evidence>
<evidence type="ECO:0000256" key="2">
    <source>
        <dbReference type="SAM" id="MobiDB-lite"/>
    </source>
</evidence>
<sequence>MENLSERFNVLQDQLMNIYETAAQTLEAQIEHWQILRREAVLLYFARQKGVTRLGYQPVPALMVSEAKAKEAIGMVLQLQSLQKSEFGKEPWSLVDTSTETYKSPPENHFKKGPMPIEVIYDKDADNANAYTMWRYIYYVDDDDKWHKSASGVNHTGIYFMHGSFRHYYVLFADDARRYSNTGHWEVKVNKDTVFTPVTSSTPPESPGGQADSNTSSKTPTTDTASRLSPTGSGERSQQTSTKGRRYERRPSSRTRRQQAQARQRRSRSKSRSRSRSQSRSRIRSRSRSRSRSESQSSKRRSRSRSRRKTSATRGRGPGSPTTTTSDRAARSPSTTSSATSQRSQRSRSRAGSSRGGRGRGGRRRHRLSESPTSKRSRRESGSVRLHGVSADAVGTSVHTVSSRHTGRLGRLLEEALDPPVILVRGDANTLRSFRNRAKHMYTGLFSSFSTAWSWVAGDGIERLGRSRMLISFISNSQRKHFDDAVRYPKGVDRSFGSFDSL</sequence>
<organism>
    <name type="scientific">Human papillomavirus 25</name>
    <dbReference type="NCBI Taxonomy" id="10609"/>
    <lineage>
        <taxon>Viruses</taxon>
        <taxon>Monodnaviria</taxon>
        <taxon>Shotokuvirae</taxon>
        <taxon>Cossaviricota</taxon>
        <taxon>Papovaviricetes</taxon>
        <taxon>Zurhausenvirales</taxon>
        <taxon>Papillomaviridae</taxon>
        <taxon>Firstpapillomavirinae</taxon>
        <taxon>Betapapillomavirus</taxon>
        <taxon>Betapapillomavirus 1</taxon>
    </lineage>
</organism>
<keyword id="KW-0010">Activator</keyword>
<keyword id="KW-0235">DNA replication</keyword>
<keyword id="KW-0238">DNA-binding</keyword>
<keyword id="KW-0244">Early protein</keyword>
<keyword id="KW-1048">Host nucleus</keyword>
<keyword id="KW-0597">Phosphoprotein</keyword>
<keyword id="KW-0678">Repressor</keyword>
<keyword id="KW-0804">Transcription</keyword>
<keyword id="KW-0805">Transcription regulation</keyword>
<proteinExistence type="inferred from homology"/>
<reference key="1">
    <citation type="journal article" date="1994" name="Curr. Top. Microbiol. Immunol.">
        <title>Primer-directed sequencing of human papillomavirus types.</title>
        <authorList>
            <person name="Delius H."/>
            <person name="Hofmann B."/>
        </authorList>
    </citation>
    <scope>NUCLEOTIDE SEQUENCE [GENOMIC DNA]</scope>
</reference>
<feature type="chain" id="PRO_0000133204" description="Regulatory protein E2">
    <location>
        <begin position="1"/>
        <end position="502"/>
    </location>
</feature>
<feature type="region of interest" description="Transactivation domain" evidence="1">
    <location>
        <begin position="1"/>
        <end position="201"/>
    </location>
</feature>
<feature type="region of interest" description="Disordered" evidence="2">
    <location>
        <begin position="195"/>
        <end position="388"/>
    </location>
</feature>
<feature type="region of interest" description="DNA-binding domain" evidence="1">
    <location>
        <begin position="418"/>
        <end position="502"/>
    </location>
</feature>
<feature type="compositionally biased region" description="Polar residues" evidence="2">
    <location>
        <begin position="211"/>
        <end position="242"/>
    </location>
</feature>
<feature type="compositionally biased region" description="Basic residues" evidence="2">
    <location>
        <begin position="243"/>
        <end position="290"/>
    </location>
</feature>
<feature type="compositionally biased region" description="Basic residues" evidence="2">
    <location>
        <begin position="298"/>
        <end position="311"/>
    </location>
</feature>
<feature type="compositionally biased region" description="Low complexity" evidence="2">
    <location>
        <begin position="312"/>
        <end position="344"/>
    </location>
</feature>
<feature type="compositionally biased region" description="Basic residues" evidence="2">
    <location>
        <begin position="357"/>
        <end position="367"/>
    </location>
</feature>
<gene>
    <name evidence="1" type="primary">E2</name>
</gene>
<comment type="function">
    <text evidence="1">Plays a role in the initiation of viral DNA replication. A dimer of E2 interacts with a dimer of E1 in order to improve specificity of E1 DNA binding activity. Once the complex recognizes and binds DNA at specific sites, the E2 dimer is removed from DNA. E2 also regulates viral transcription through binding to the E2RE response element (5'-ACCNNNNNNGGT-3') present in multiple copies in the regulatory regions of the viral genome. Activates or represses transcription depending on E2RE's position with regards to proximal promoter elements including the TATA-box. Repression occurs by sterically hindering the assembly of the transcription initiation complex.</text>
</comment>
<comment type="subunit">
    <text evidence="1">Binds DNA as homodimer. Interacts with protein E1; this interaction greatly increases E1 DNA-binding activity. Interacts with protein L1; this interaction enhances E2-dependent replication and transcription activation. Interacts with protein L2; this interaction inhibits E2 transcriptional activity but not DNA replication function E2. Interacts with protein E7; this interaction inhibits E7 oncogenic activity. Interacts with host TAF1; this interaction modulates E2-dependent transcriptional regulation. Interacts with host BRD4; this interaction mediates E2 transcriptional activation function. Additionally, the interaction with host BRD4 on mitotic chromosomes mediates tethering of the viral genome. Interacts with host TOPBP1; this interaction is required for optimal viral DNA replication.</text>
</comment>
<comment type="subcellular location">
    <subcellularLocation>
        <location evidence="1">Host nucleus</location>
    </subcellularLocation>
</comment>
<comment type="PTM">
    <text evidence="1">Phosphorylated.</text>
</comment>
<comment type="similarity">
    <text evidence="1">Belongs to the papillomaviridae E2 protein family.</text>
</comment>
<dbReference type="EMBL" id="X74471">
    <property type="protein sequence ID" value="CAA52527.1"/>
    <property type="molecule type" value="Genomic_DNA"/>
</dbReference>
<dbReference type="PIR" id="S36494">
    <property type="entry name" value="S36494"/>
</dbReference>
<dbReference type="SMR" id="P36787"/>
<dbReference type="Proteomes" id="UP000009162">
    <property type="component" value="Genome"/>
</dbReference>
<dbReference type="GO" id="GO:0042025">
    <property type="term" value="C:host cell nucleus"/>
    <property type="evidence" value="ECO:0007669"/>
    <property type="project" value="UniProtKB-SubCell"/>
</dbReference>
<dbReference type="GO" id="GO:0003677">
    <property type="term" value="F:DNA binding"/>
    <property type="evidence" value="ECO:0007669"/>
    <property type="project" value="UniProtKB-UniRule"/>
</dbReference>
<dbReference type="GO" id="GO:0003700">
    <property type="term" value="F:DNA-binding transcription factor activity"/>
    <property type="evidence" value="ECO:0007669"/>
    <property type="project" value="UniProtKB-UniRule"/>
</dbReference>
<dbReference type="GO" id="GO:0000166">
    <property type="term" value="F:nucleotide binding"/>
    <property type="evidence" value="ECO:0007669"/>
    <property type="project" value="UniProtKB-UniRule"/>
</dbReference>
<dbReference type="GO" id="GO:0006260">
    <property type="term" value="P:DNA replication"/>
    <property type="evidence" value="ECO:0007669"/>
    <property type="project" value="UniProtKB-KW"/>
</dbReference>
<dbReference type="GO" id="GO:0006351">
    <property type="term" value="P:DNA-templated transcription"/>
    <property type="evidence" value="ECO:0007669"/>
    <property type="project" value="UniProtKB-UniRule"/>
</dbReference>
<dbReference type="GO" id="GO:0006275">
    <property type="term" value="P:regulation of DNA replication"/>
    <property type="evidence" value="ECO:0007669"/>
    <property type="project" value="UniProtKB-UniRule"/>
</dbReference>
<dbReference type="GO" id="GO:0039693">
    <property type="term" value="P:viral DNA genome replication"/>
    <property type="evidence" value="ECO:0007669"/>
    <property type="project" value="UniProtKB-UniRule"/>
</dbReference>
<dbReference type="Gene3D" id="3.30.70.330">
    <property type="match status" value="1"/>
</dbReference>
<dbReference type="Gene3D" id="1.10.287.30">
    <property type="entry name" value="E2 (early) protein, N terminal domain, subdomain 1"/>
    <property type="match status" value="1"/>
</dbReference>
<dbReference type="Gene3D" id="2.170.200.10">
    <property type="entry name" value="Papillomavirus E2 early protein domain"/>
    <property type="match status" value="1"/>
</dbReference>
<dbReference type="HAMAP" id="MF_04001">
    <property type="entry name" value="PPV_E2"/>
    <property type="match status" value="1"/>
</dbReference>
<dbReference type="InterPro" id="IPR035975">
    <property type="entry name" value="E2/EBNA1_C_sf"/>
</dbReference>
<dbReference type="InterPro" id="IPR012677">
    <property type="entry name" value="Nucleotide-bd_a/b_plait_sf"/>
</dbReference>
<dbReference type="InterPro" id="IPR000427">
    <property type="entry name" value="Papillomavirus_E2_C"/>
</dbReference>
<dbReference type="InterPro" id="IPR001866">
    <property type="entry name" value="PPV_E2_N"/>
</dbReference>
<dbReference type="InterPro" id="IPR033668">
    <property type="entry name" value="Reg_prot_E2"/>
</dbReference>
<dbReference type="InterPro" id="IPR036050">
    <property type="entry name" value="Regulatory_protein_E2_N"/>
</dbReference>
<dbReference type="InterPro" id="IPR042503">
    <property type="entry name" value="Regulatory_protein_E2_N_1"/>
</dbReference>
<dbReference type="InterPro" id="IPR042504">
    <property type="entry name" value="Regulatory_protein_E2_N_2"/>
</dbReference>
<dbReference type="Pfam" id="PF00511">
    <property type="entry name" value="PPV_E2_C"/>
    <property type="match status" value="1"/>
</dbReference>
<dbReference type="Pfam" id="PF00508">
    <property type="entry name" value="PPV_E2_N"/>
    <property type="match status" value="1"/>
</dbReference>
<dbReference type="SUPFAM" id="SSF51332">
    <property type="entry name" value="E2 regulatory, transactivation domain"/>
    <property type="match status" value="1"/>
</dbReference>
<dbReference type="SUPFAM" id="SSF54957">
    <property type="entry name" value="Viral DNA-binding domain"/>
    <property type="match status" value="1"/>
</dbReference>
<organismHost>
    <name type="scientific">Homo sapiens</name>
    <name type="common">Human</name>
    <dbReference type="NCBI Taxonomy" id="9606"/>
</organismHost>
<accession>P36787</accession>
<protein>
    <recommendedName>
        <fullName evidence="1">Regulatory protein E2</fullName>
    </recommendedName>
</protein>
<name>VE2_HPV25</name>